<name>COAD_STRA1</name>
<protein>
    <recommendedName>
        <fullName evidence="1">Phosphopantetheine adenylyltransferase</fullName>
        <ecNumber evidence="1">2.7.7.3</ecNumber>
    </recommendedName>
    <alternativeName>
        <fullName evidence="1">Dephospho-CoA pyrophosphorylase</fullName>
    </alternativeName>
    <alternativeName>
        <fullName evidence="1">Pantetheine-phosphate adenylyltransferase</fullName>
        <shortName evidence="1">PPAT</shortName>
    </alternativeName>
</protein>
<organism>
    <name type="scientific">Streptococcus agalactiae serotype Ia (strain ATCC 27591 / A909 / CDC SS700)</name>
    <dbReference type="NCBI Taxonomy" id="205921"/>
    <lineage>
        <taxon>Bacteria</taxon>
        <taxon>Bacillati</taxon>
        <taxon>Bacillota</taxon>
        <taxon>Bacilli</taxon>
        <taxon>Lactobacillales</taxon>
        <taxon>Streptococcaceae</taxon>
        <taxon>Streptococcus</taxon>
    </lineage>
</organism>
<gene>
    <name evidence="1" type="primary">coaD</name>
    <name type="ordered locus">SAK_0555</name>
</gene>
<evidence type="ECO:0000255" key="1">
    <source>
        <dbReference type="HAMAP-Rule" id="MF_00151"/>
    </source>
</evidence>
<feature type="chain" id="PRO_1000011249" description="Phosphopantetheine adenylyltransferase">
    <location>
        <begin position="1"/>
        <end position="161"/>
    </location>
</feature>
<feature type="binding site" evidence="1">
    <location>
        <begin position="10"/>
        <end position="11"/>
    </location>
    <ligand>
        <name>ATP</name>
        <dbReference type="ChEBI" id="CHEBI:30616"/>
    </ligand>
</feature>
<feature type="binding site" evidence="1">
    <location>
        <position position="10"/>
    </location>
    <ligand>
        <name>substrate</name>
    </ligand>
</feature>
<feature type="binding site" evidence="1">
    <location>
        <position position="18"/>
    </location>
    <ligand>
        <name>ATP</name>
        <dbReference type="ChEBI" id="CHEBI:30616"/>
    </ligand>
</feature>
<feature type="binding site" evidence="1">
    <location>
        <position position="42"/>
    </location>
    <ligand>
        <name>substrate</name>
    </ligand>
</feature>
<feature type="binding site" evidence="1">
    <location>
        <position position="75"/>
    </location>
    <ligand>
        <name>substrate</name>
    </ligand>
</feature>
<feature type="binding site" evidence="1">
    <location>
        <position position="89"/>
    </location>
    <ligand>
        <name>substrate</name>
    </ligand>
</feature>
<feature type="binding site" evidence="1">
    <location>
        <begin position="90"/>
        <end position="92"/>
    </location>
    <ligand>
        <name>ATP</name>
        <dbReference type="ChEBI" id="CHEBI:30616"/>
    </ligand>
</feature>
<feature type="binding site" evidence="1">
    <location>
        <position position="100"/>
    </location>
    <ligand>
        <name>ATP</name>
        <dbReference type="ChEBI" id="CHEBI:30616"/>
    </ligand>
</feature>
<feature type="binding site" evidence="1">
    <location>
        <begin position="125"/>
        <end position="131"/>
    </location>
    <ligand>
        <name>ATP</name>
        <dbReference type="ChEBI" id="CHEBI:30616"/>
    </ligand>
</feature>
<feature type="site" description="Transition state stabilizer" evidence="1">
    <location>
        <position position="18"/>
    </location>
</feature>
<accession>Q3K2R6</accession>
<reference key="1">
    <citation type="journal article" date="2005" name="Proc. Natl. Acad. Sci. U.S.A.">
        <title>Genome analysis of multiple pathogenic isolates of Streptococcus agalactiae: implications for the microbial 'pan-genome'.</title>
        <authorList>
            <person name="Tettelin H."/>
            <person name="Masignani V."/>
            <person name="Cieslewicz M.J."/>
            <person name="Donati C."/>
            <person name="Medini D."/>
            <person name="Ward N.L."/>
            <person name="Angiuoli S.V."/>
            <person name="Crabtree J."/>
            <person name="Jones A.L."/>
            <person name="Durkin A.S."/>
            <person name="DeBoy R.T."/>
            <person name="Davidsen T.M."/>
            <person name="Mora M."/>
            <person name="Scarselli M."/>
            <person name="Margarit y Ros I."/>
            <person name="Peterson J.D."/>
            <person name="Hauser C.R."/>
            <person name="Sundaram J.P."/>
            <person name="Nelson W.C."/>
            <person name="Madupu R."/>
            <person name="Brinkac L.M."/>
            <person name="Dodson R.J."/>
            <person name="Rosovitz M.J."/>
            <person name="Sullivan S.A."/>
            <person name="Daugherty S.C."/>
            <person name="Haft D.H."/>
            <person name="Selengut J."/>
            <person name="Gwinn M.L."/>
            <person name="Zhou L."/>
            <person name="Zafar N."/>
            <person name="Khouri H."/>
            <person name="Radune D."/>
            <person name="Dimitrov G."/>
            <person name="Watkins K."/>
            <person name="O'Connor K.J."/>
            <person name="Smith S."/>
            <person name="Utterback T.R."/>
            <person name="White O."/>
            <person name="Rubens C.E."/>
            <person name="Grandi G."/>
            <person name="Madoff L.C."/>
            <person name="Kasper D.L."/>
            <person name="Telford J.L."/>
            <person name="Wessels M.R."/>
            <person name="Rappuoli R."/>
            <person name="Fraser C.M."/>
        </authorList>
    </citation>
    <scope>NUCLEOTIDE SEQUENCE [LARGE SCALE GENOMIC DNA]</scope>
    <source>
        <strain>ATCC 27591 / A909 / CDC SS700</strain>
    </source>
</reference>
<sequence>MTKKALFTGSFDPVTNGHLDIIERASYLFDHVYIGLFYNLEKQGYFSIECRKKMLEEAIRQFKNVSVLVAQDRLAVDLAREVGAKYFVRGLRNSQDFDYEANLEFFNKQLADDIETVYLSTSPSLSPISSSRIRELIHFKASVKPFVPKSVVREVEKMSEE</sequence>
<dbReference type="EC" id="2.7.7.3" evidence="1"/>
<dbReference type="EMBL" id="CP000114">
    <property type="protein sequence ID" value="ABA46072.1"/>
    <property type="molecule type" value="Genomic_DNA"/>
</dbReference>
<dbReference type="RefSeq" id="WP_000161892.1">
    <property type="nucleotide sequence ID" value="NC_007432.1"/>
</dbReference>
<dbReference type="SMR" id="Q3K2R6"/>
<dbReference type="KEGG" id="sak:SAK_0555"/>
<dbReference type="HOGENOM" id="CLU_100149_0_1_9"/>
<dbReference type="UniPathway" id="UPA00241">
    <property type="reaction ID" value="UER00355"/>
</dbReference>
<dbReference type="GO" id="GO:0005737">
    <property type="term" value="C:cytoplasm"/>
    <property type="evidence" value="ECO:0007669"/>
    <property type="project" value="UniProtKB-SubCell"/>
</dbReference>
<dbReference type="GO" id="GO:0005524">
    <property type="term" value="F:ATP binding"/>
    <property type="evidence" value="ECO:0007669"/>
    <property type="project" value="UniProtKB-KW"/>
</dbReference>
<dbReference type="GO" id="GO:0004595">
    <property type="term" value="F:pantetheine-phosphate adenylyltransferase activity"/>
    <property type="evidence" value="ECO:0007669"/>
    <property type="project" value="UniProtKB-UniRule"/>
</dbReference>
<dbReference type="GO" id="GO:0015937">
    <property type="term" value="P:coenzyme A biosynthetic process"/>
    <property type="evidence" value="ECO:0007669"/>
    <property type="project" value="UniProtKB-UniRule"/>
</dbReference>
<dbReference type="CDD" id="cd02163">
    <property type="entry name" value="PPAT"/>
    <property type="match status" value="1"/>
</dbReference>
<dbReference type="Gene3D" id="3.40.50.620">
    <property type="entry name" value="HUPs"/>
    <property type="match status" value="1"/>
</dbReference>
<dbReference type="HAMAP" id="MF_00151">
    <property type="entry name" value="PPAT_bact"/>
    <property type="match status" value="1"/>
</dbReference>
<dbReference type="InterPro" id="IPR004821">
    <property type="entry name" value="Cyt_trans-like"/>
</dbReference>
<dbReference type="InterPro" id="IPR001980">
    <property type="entry name" value="PPAT"/>
</dbReference>
<dbReference type="InterPro" id="IPR014729">
    <property type="entry name" value="Rossmann-like_a/b/a_fold"/>
</dbReference>
<dbReference type="NCBIfam" id="TIGR01510">
    <property type="entry name" value="coaD_prev_kdtB"/>
    <property type="match status" value="1"/>
</dbReference>
<dbReference type="NCBIfam" id="TIGR00125">
    <property type="entry name" value="cyt_tran_rel"/>
    <property type="match status" value="1"/>
</dbReference>
<dbReference type="PANTHER" id="PTHR21342">
    <property type="entry name" value="PHOSPHOPANTETHEINE ADENYLYLTRANSFERASE"/>
    <property type="match status" value="1"/>
</dbReference>
<dbReference type="PANTHER" id="PTHR21342:SF1">
    <property type="entry name" value="PHOSPHOPANTETHEINE ADENYLYLTRANSFERASE"/>
    <property type="match status" value="1"/>
</dbReference>
<dbReference type="Pfam" id="PF01467">
    <property type="entry name" value="CTP_transf_like"/>
    <property type="match status" value="1"/>
</dbReference>
<dbReference type="PRINTS" id="PR01020">
    <property type="entry name" value="LPSBIOSNTHSS"/>
</dbReference>
<dbReference type="SUPFAM" id="SSF52374">
    <property type="entry name" value="Nucleotidylyl transferase"/>
    <property type="match status" value="1"/>
</dbReference>
<proteinExistence type="inferred from homology"/>
<comment type="function">
    <text evidence="1">Reversibly transfers an adenylyl group from ATP to 4'-phosphopantetheine, yielding dephospho-CoA (dPCoA) and pyrophosphate.</text>
</comment>
<comment type="catalytic activity">
    <reaction evidence="1">
        <text>(R)-4'-phosphopantetheine + ATP + H(+) = 3'-dephospho-CoA + diphosphate</text>
        <dbReference type="Rhea" id="RHEA:19801"/>
        <dbReference type="ChEBI" id="CHEBI:15378"/>
        <dbReference type="ChEBI" id="CHEBI:30616"/>
        <dbReference type="ChEBI" id="CHEBI:33019"/>
        <dbReference type="ChEBI" id="CHEBI:57328"/>
        <dbReference type="ChEBI" id="CHEBI:61723"/>
        <dbReference type="EC" id="2.7.7.3"/>
    </reaction>
</comment>
<comment type="cofactor">
    <cofactor evidence="1">
        <name>Mg(2+)</name>
        <dbReference type="ChEBI" id="CHEBI:18420"/>
    </cofactor>
</comment>
<comment type="pathway">
    <text evidence="1">Cofactor biosynthesis; coenzyme A biosynthesis; CoA from (R)-pantothenate: step 4/5.</text>
</comment>
<comment type="subunit">
    <text evidence="1">Homohexamer.</text>
</comment>
<comment type="subcellular location">
    <subcellularLocation>
        <location evidence="1">Cytoplasm</location>
    </subcellularLocation>
</comment>
<comment type="similarity">
    <text evidence="1">Belongs to the bacterial CoaD family.</text>
</comment>
<keyword id="KW-0067">ATP-binding</keyword>
<keyword id="KW-0173">Coenzyme A biosynthesis</keyword>
<keyword id="KW-0963">Cytoplasm</keyword>
<keyword id="KW-0460">Magnesium</keyword>
<keyword id="KW-0547">Nucleotide-binding</keyword>
<keyword id="KW-0548">Nucleotidyltransferase</keyword>
<keyword id="KW-0808">Transferase</keyword>